<proteinExistence type="inferred from homology"/>
<sequence>MLYRRNPQLNKNGELIHLLSTEGLSKAILTQILDTAANFVSVSSREVKKVPLLRGKSVFNLFFENSTRTRTTFEIAATRLSADVINLDIARSSASKGESLLDTIANLSAMAADLFVVRHGESGAPYLIAQHVAPHVHVVNAGDGRHAHPTQGLLDMYTIRHYKKDFSNLTVAIVGDVLHSRVARSDIHALTTLGCAEVRVVGPKTLVPADMAQMGVRVCNTLEEGIRGADVIIMLRLQNERMTGALLPSSQEFSKSFGLTTDKLQLARPDAIVMHPGPINRGVEIDSAVVDGVQSVILPQVTFGIAVRMAVMSIVAGNEA</sequence>
<evidence type="ECO:0000255" key="1">
    <source>
        <dbReference type="HAMAP-Rule" id="MF_00001"/>
    </source>
</evidence>
<name>PYRB_POLNA</name>
<feature type="chain" id="PRO_0000321134" description="Aspartate carbamoyltransferase catalytic subunit">
    <location>
        <begin position="1"/>
        <end position="320"/>
    </location>
</feature>
<feature type="binding site" evidence="1">
    <location>
        <position position="68"/>
    </location>
    <ligand>
        <name>carbamoyl phosphate</name>
        <dbReference type="ChEBI" id="CHEBI:58228"/>
    </ligand>
</feature>
<feature type="binding site" evidence="1">
    <location>
        <position position="69"/>
    </location>
    <ligand>
        <name>carbamoyl phosphate</name>
        <dbReference type="ChEBI" id="CHEBI:58228"/>
    </ligand>
</feature>
<feature type="binding site" evidence="1">
    <location>
        <position position="96"/>
    </location>
    <ligand>
        <name>L-aspartate</name>
        <dbReference type="ChEBI" id="CHEBI:29991"/>
    </ligand>
</feature>
<feature type="binding site" evidence="1">
    <location>
        <position position="118"/>
    </location>
    <ligand>
        <name>carbamoyl phosphate</name>
        <dbReference type="ChEBI" id="CHEBI:58228"/>
    </ligand>
</feature>
<feature type="binding site" evidence="1">
    <location>
        <position position="148"/>
    </location>
    <ligand>
        <name>carbamoyl phosphate</name>
        <dbReference type="ChEBI" id="CHEBI:58228"/>
    </ligand>
</feature>
<feature type="binding site" evidence="1">
    <location>
        <position position="151"/>
    </location>
    <ligand>
        <name>carbamoyl phosphate</name>
        <dbReference type="ChEBI" id="CHEBI:58228"/>
    </ligand>
</feature>
<feature type="binding site" evidence="1">
    <location>
        <position position="181"/>
    </location>
    <ligand>
        <name>L-aspartate</name>
        <dbReference type="ChEBI" id="CHEBI:29991"/>
    </ligand>
</feature>
<feature type="binding site" evidence="1">
    <location>
        <position position="236"/>
    </location>
    <ligand>
        <name>L-aspartate</name>
        <dbReference type="ChEBI" id="CHEBI:29991"/>
    </ligand>
</feature>
<feature type="binding site" evidence="1">
    <location>
        <position position="277"/>
    </location>
    <ligand>
        <name>carbamoyl phosphate</name>
        <dbReference type="ChEBI" id="CHEBI:58228"/>
    </ligand>
</feature>
<feature type="binding site" evidence="1">
    <location>
        <position position="278"/>
    </location>
    <ligand>
        <name>carbamoyl phosphate</name>
        <dbReference type="ChEBI" id="CHEBI:58228"/>
    </ligand>
</feature>
<comment type="function">
    <text evidence="1">Catalyzes the condensation of carbamoyl phosphate and aspartate to form carbamoyl aspartate and inorganic phosphate, the committed step in the de novo pyrimidine nucleotide biosynthesis pathway.</text>
</comment>
<comment type="catalytic activity">
    <reaction evidence="1">
        <text>carbamoyl phosphate + L-aspartate = N-carbamoyl-L-aspartate + phosphate + H(+)</text>
        <dbReference type="Rhea" id="RHEA:20013"/>
        <dbReference type="ChEBI" id="CHEBI:15378"/>
        <dbReference type="ChEBI" id="CHEBI:29991"/>
        <dbReference type="ChEBI" id="CHEBI:32814"/>
        <dbReference type="ChEBI" id="CHEBI:43474"/>
        <dbReference type="ChEBI" id="CHEBI:58228"/>
        <dbReference type="EC" id="2.1.3.2"/>
    </reaction>
</comment>
<comment type="pathway">
    <text evidence="1">Pyrimidine metabolism; UMP biosynthesis via de novo pathway; (S)-dihydroorotate from bicarbonate: step 2/3.</text>
</comment>
<comment type="subunit">
    <text evidence="1">Heterododecamer (2C3:3R2) of six catalytic PyrB chains organized as two trimers (C3), and six regulatory PyrI chains organized as three dimers (R2).</text>
</comment>
<comment type="similarity">
    <text evidence="1">Belongs to the aspartate/ornithine carbamoyltransferase superfamily. ATCase family.</text>
</comment>
<accession>A1VSL4</accession>
<gene>
    <name evidence="1" type="primary">pyrB</name>
    <name type="ordered locus">Pnap_3345</name>
</gene>
<organism>
    <name type="scientific">Polaromonas naphthalenivorans (strain CJ2)</name>
    <dbReference type="NCBI Taxonomy" id="365044"/>
    <lineage>
        <taxon>Bacteria</taxon>
        <taxon>Pseudomonadati</taxon>
        <taxon>Pseudomonadota</taxon>
        <taxon>Betaproteobacteria</taxon>
        <taxon>Burkholderiales</taxon>
        <taxon>Comamonadaceae</taxon>
        <taxon>Polaromonas</taxon>
    </lineage>
</organism>
<keyword id="KW-0665">Pyrimidine biosynthesis</keyword>
<keyword id="KW-1185">Reference proteome</keyword>
<keyword id="KW-0808">Transferase</keyword>
<reference key="1">
    <citation type="journal article" date="2009" name="Environ. Microbiol.">
        <title>The genome of Polaromonas naphthalenivorans strain CJ2, isolated from coal tar-contaminated sediment, reveals physiological and metabolic versatility and evolution through extensive horizontal gene transfer.</title>
        <authorList>
            <person name="Yagi J.M."/>
            <person name="Sims D."/>
            <person name="Brettin T."/>
            <person name="Bruce D."/>
            <person name="Madsen E.L."/>
        </authorList>
    </citation>
    <scope>NUCLEOTIDE SEQUENCE [LARGE SCALE GENOMIC DNA]</scope>
    <source>
        <strain>CJ2</strain>
    </source>
</reference>
<protein>
    <recommendedName>
        <fullName evidence="1">Aspartate carbamoyltransferase catalytic subunit</fullName>
        <ecNumber evidence="1">2.1.3.2</ecNumber>
    </recommendedName>
    <alternativeName>
        <fullName evidence="1">Aspartate transcarbamylase</fullName>
        <shortName evidence="1">ATCase</shortName>
    </alternativeName>
</protein>
<dbReference type="EC" id="2.1.3.2" evidence="1"/>
<dbReference type="EMBL" id="CP000529">
    <property type="protein sequence ID" value="ABM38642.1"/>
    <property type="molecule type" value="Genomic_DNA"/>
</dbReference>
<dbReference type="RefSeq" id="WP_011802713.1">
    <property type="nucleotide sequence ID" value="NC_008781.1"/>
</dbReference>
<dbReference type="SMR" id="A1VSL4"/>
<dbReference type="STRING" id="365044.Pnap_3345"/>
<dbReference type="KEGG" id="pna:Pnap_3345"/>
<dbReference type="eggNOG" id="COG0540">
    <property type="taxonomic scope" value="Bacteria"/>
</dbReference>
<dbReference type="HOGENOM" id="CLU_043846_2_0_4"/>
<dbReference type="OrthoDB" id="9774690at2"/>
<dbReference type="UniPathway" id="UPA00070">
    <property type="reaction ID" value="UER00116"/>
</dbReference>
<dbReference type="Proteomes" id="UP000000644">
    <property type="component" value="Chromosome"/>
</dbReference>
<dbReference type="GO" id="GO:0005829">
    <property type="term" value="C:cytosol"/>
    <property type="evidence" value="ECO:0007669"/>
    <property type="project" value="TreeGrafter"/>
</dbReference>
<dbReference type="GO" id="GO:0016597">
    <property type="term" value="F:amino acid binding"/>
    <property type="evidence" value="ECO:0007669"/>
    <property type="project" value="InterPro"/>
</dbReference>
<dbReference type="GO" id="GO:0004070">
    <property type="term" value="F:aspartate carbamoyltransferase activity"/>
    <property type="evidence" value="ECO:0007669"/>
    <property type="project" value="UniProtKB-UniRule"/>
</dbReference>
<dbReference type="GO" id="GO:0006207">
    <property type="term" value="P:'de novo' pyrimidine nucleobase biosynthetic process"/>
    <property type="evidence" value="ECO:0007669"/>
    <property type="project" value="InterPro"/>
</dbReference>
<dbReference type="GO" id="GO:0044205">
    <property type="term" value="P:'de novo' UMP biosynthetic process"/>
    <property type="evidence" value="ECO:0007669"/>
    <property type="project" value="UniProtKB-UniRule"/>
</dbReference>
<dbReference type="GO" id="GO:0006520">
    <property type="term" value="P:amino acid metabolic process"/>
    <property type="evidence" value="ECO:0007669"/>
    <property type="project" value="InterPro"/>
</dbReference>
<dbReference type="FunFam" id="3.40.50.1370:FF:000007">
    <property type="entry name" value="Aspartate carbamoyltransferase"/>
    <property type="match status" value="1"/>
</dbReference>
<dbReference type="Gene3D" id="3.40.50.1370">
    <property type="entry name" value="Aspartate/ornithine carbamoyltransferase"/>
    <property type="match status" value="2"/>
</dbReference>
<dbReference type="HAMAP" id="MF_00001">
    <property type="entry name" value="Asp_carb_tr"/>
    <property type="match status" value="1"/>
</dbReference>
<dbReference type="InterPro" id="IPR006132">
    <property type="entry name" value="Asp/Orn_carbamoyltranf_P-bd"/>
</dbReference>
<dbReference type="InterPro" id="IPR006130">
    <property type="entry name" value="Asp/Orn_carbamoylTrfase"/>
</dbReference>
<dbReference type="InterPro" id="IPR036901">
    <property type="entry name" value="Asp/Orn_carbamoylTrfase_sf"/>
</dbReference>
<dbReference type="InterPro" id="IPR002082">
    <property type="entry name" value="Asp_carbamoyltransf"/>
</dbReference>
<dbReference type="InterPro" id="IPR006131">
    <property type="entry name" value="Asp_carbamoyltransf_Asp/Orn-bd"/>
</dbReference>
<dbReference type="NCBIfam" id="TIGR00670">
    <property type="entry name" value="asp_carb_tr"/>
    <property type="match status" value="1"/>
</dbReference>
<dbReference type="NCBIfam" id="NF002032">
    <property type="entry name" value="PRK00856.1"/>
    <property type="match status" value="1"/>
</dbReference>
<dbReference type="PANTHER" id="PTHR45753:SF6">
    <property type="entry name" value="ASPARTATE CARBAMOYLTRANSFERASE"/>
    <property type="match status" value="1"/>
</dbReference>
<dbReference type="PANTHER" id="PTHR45753">
    <property type="entry name" value="ORNITHINE CARBAMOYLTRANSFERASE, MITOCHONDRIAL"/>
    <property type="match status" value="1"/>
</dbReference>
<dbReference type="Pfam" id="PF00185">
    <property type="entry name" value="OTCace"/>
    <property type="match status" value="1"/>
</dbReference>
<dbReference type="Pfam" id="PF02729">
    <property type="entry name" value="OTCace_N"/>
    <property type="match status" value="1"/>
</dbReference>
<dbReference type="PRINTS" id="PR00100">
    <property type="entry name" value="AOTCASE"/>
</dbReference>
<dbReference type="PRINTS" id="PR00101">
    <property type="entry name" value="ATCASE"/>
</dbReference>
<dbReference type="SUPFAM" id="SSF53671">
    <property type="entry name" value="Aspartate/ornithine carbamoyltransferase"/>
    <property type="match status" value="1"/>
</dbReference>
<dbReference type="PROSITE" id="PS00097">
    <property type="entry name" value="CARBAMOYLTRANSFERASE"/>
    <property type="match status" value="1"/>
</dbReference>